<reference key="1">
    <citation type="journal article" date="2006" name="PLoS Genet.">
        <title>The complete genome sequence and comparative genome analysis of the high pathogenicity Yersinia enterocolitica strain 8081.</title>
        <authorList>
            <person name="Thomson N.R."/>
            <person name="Howard S."/>
            <person name="Wren B.W."/>
            <person name="Holden M.T.G."/>
            <person name="Crossman L."/>
            <person name="Challis G.L."/>
            <person name="Churcher C."/>
            <person name="Mungall K."/>
            <person name="Brooks K."/>
            <person name="Chillingworth T."/>
            <person name="Feltwell T."/>
            <person name="Abdellah Z."/>
            <person name="Hauser H."/>
            <person name="Jagels K."/>
            <person name="Maddison M."/>
            <person name="Moule S."/>
            <person name="Sanders M."/>
            <person name="Whitehead S."/>
            <person name="Quail M.A."/>
            <person name="Dougan G."/>
            <person name="Parkhill J."/>
            <person name="Prentice M.B."/>
        </authorList>
    </citation>
    <scope>NUCLEOTIDE SEQUENCE [LARGE SCALE GENOMIC DNA]</scope>
    <source>
        <strain>NCTC 13174 / 8081</strain>
    </source>
</reference>
<dbReference type="EMBL" id="AM286415">
    <property type="protein sequence ID" value="CAL13452.1"/>
    <property type="molecule type" value="Genomic_DNA"/>
</dbReference>
<dbReference type="RefSeq" id="WP_011817044.1">
    <property type="nucleotide sequence ID" value="NC_008800.1"/>
</dbReference>
<dbReference type="RefSeq" id="YP_001007594.1">
    <property type="nucleotide sequence ID" value="NC_008800.1"/>
</dbReference>
<dbReference type="SMR" id="A1JPT5"/>
<dbReference type="KEGG" id="yen:YE3428"/>
<dbReference type="PATRIC" id="fig|393305.7.peg.3641"/>
<dbReference type="eggNOG" id="COG1678">
    <property type="taxonomic scope" value="Bacteria"/>
</dbReference>
<dbReference type="HOGENOM" id="CLU_057596_1_0_6"/>
<dbReference type="OrthoDB" id="9807486at2"/>
<dbReference type="Proteomes" id="UP000000642">
    <property type="component" value="Chromosome"/>
</dbReference>
<dbReference type="GO" id="GO:0005829">
    <property type="term" value="C:cytosol"/>
    <property type="evidence" value="ECO:0007669"/>
    <property type="project" value="TreeGrafter"/>
</dbReference>
<dbReference type="Gene3D" id="3.40.1740.10">
    <property type="entry name" value="VC0467-like"/>
    <property type="match status" value="1"/>
</dbReference>
<dbReference type="Gene3D" id="3.30.70.1300">
    <property type="entry name" value="VC0467-like domains"/>
    <property type="match status" value="1"/>
</dbReference>
<dbReference type="HAMAP" id="MF_00758">
    <property type="entry name" value="UPF0301"/>
    <property type="match status" value="1"/>
</dbReference>
<dbReference type="InterPro" id="IPR003774">
    <property type="entry name" value="AlgH-like"/>
</dbReference>
<dbReference type="NCBIfam" id="NF001266">
    <property type="entry name" value="PRK00228.1-1"/>
    <property type="match status" value="1"/>
</dbReference>
<dbReference type="PANTHER" id="PTHR30327">
    <property type="entry name" value="UNCHARACTERIZED PROTEIN YQGE"/>
    <property type="match status" value="1"/>
</dbReference>
<dbReference type="PANTHER" id="PTHR30327:SF1">
    <property type="entry name" value="UPF0301 PROTEIN YQGE"/>
    <property type="match status" value="1"/>
</dbReference>
<dbReference type="Pfam" id="PF02622">
    <property type="entry name" value="DUF179"/>
    <property type="match status" value="1"/>
</dbReference>
<dbReference type="SUPFAM" id="SSF143456">
    <property type="entry name" value="VC0467-like"/>
    <property type="match status" value="1"/>
</dbReference>
<gene>
    <name type="ordered locus">YE3428</name>
</gene>
<proteinExistence type="inferred from homology"/>
<accession>A1JPT5</accession>
<feature type="chain" id="PRO_1000046690" description="UPF0301 protein YE3428">
    <location>
        <begin position="1"/>
        <end position="187"/>
    </location>
</feature>
<sequence>MNLQHHFLIAMPSLQDPHFMRSVIYICEHNKEGAMGLVINKPMEQFTVETVLKKLKISPTPRDPSIRLDKAVLAGGPLAEDRGFILHSPQEGFGSSIPISPDTMITTSKDVLETLGTPEQPKNLLVALGYAGWQQGQLEQELLDNAWLTIEADTHILFNTPIAERWQAAANKLGINIFNIAPQAGHA</sequence>
<name>Y3428_YERE8</name>
<evidence type="ECO:0000255" key="1">
    <source>
        <dbReference type="HAMAP-Rule" id="MF_00758"/>
    </source>
</evidence>
<comment type="similarity">
    <text evidence="1">Belongs to the UPF0301 (AlgH) family.</text>
</comment>
<protein>
    <recommendedName>
        <fullName evidence="1">UPF0301 protein YE3428</fullName>
    </recommendedName>
</protein>
<organism>
    <name type="scientific">Yersinia enterocolitica serotype O:8 / biotype 1B (strain NCTC 13174 / 8081)</name>
    <dbReference type="NCBI Taxonomy" id="393305"/>
    <lineage>
        <taxon>Bacteria</taxon>
        <taxon>Pseudomonadati</taxon>
        <taxon>Pseudomonadota</taxon>
        <taxon>Gammaproteobacteria</taxon>
        <taxon>Enterobacterales</taxon>
        <taxon>Yersiniaceae</taxon>
        <taxon>Yersinia</taxon>
    </lineage>
</organism>